<name>SDC25_YEAS7</name>
<sequence>MSCTASYAGMTTPVKDKEGHGIPCLQPIDVVECTYQYFTKSRNKLSLRVGDLIYVLTKGSNGWWDGVLIRHSANNNNNSLILDRGWFPPSFTRSILNELHGVPDIGNELEIFQAGLNLKLELSSNPVILSLEDFLDCCRDIEFKEQLAWSPTPVHERKGCCELLYYNQDLDVYCRTLPYLPQNQVETVNDYSSFPAISKIAGKKMPITSSPDLFYLNDCDVVYWYDLTRLVCHYVNLTERDLLANEREKFLTSLDLLTAQITCVYMLFRNLRLVEDSFKKTLKKLIYTLSRFSINANIWFHSTPFEEREAIASQKDPERRSPLLQSILGTFQKFHFLLRLLHFLSNPNELTILPQLTPRFFKDSFNTISWNNPFLRKHLNQHMSHDLPRQMIKAVAGASGIVAENNDEIPASKQGTSCSSETSHHSPSAPFQRRRRGTIFSNVPGSSDESDTIWSKRKKPYPLNEETLSLVRARKEQLDAKLKQMIKSANEYLSNTANFSKMLNFEMNFKTYEEVSGTIPIIDILENLDLTIYLNLRELGDENRVFDEDVAIDDEDKEFLKHSLSSLSYILSDYFNMKQYFHDVVVKFIIVAQHLTLEDPFVFSPMQNDLPTGYYEPMKPSSLNLDNAKDKKNGSQNTDIQEEEDEYEPDPDSLILFHNLINQDSDFNDLKFFNLAHVFKKSCDDYFDVLKLSIEFVNRLILERENLLNYAARMMKNNITELLLRGEEGYGSYDGGETAEKSDTNAVYADSDTKDNDEWRDSQVKLPRYLQREYDSELIWGSNNRIKGGSKHALISYLTDNEKKDLFFNITFLITFRSIFTTTEFLSYLISQYNLDPPEDLCFEEYNEWVTKKLIPVKCRVVEIMTTFFKQYWFPGYDEPDLATLNLDYFAQVAIKENITGSVELLKEVNQKFKHGNMQEATAPMKTLDQQICQEHYWGTLYSTTESILAVDPVLFATQLTILEHEIYCEITIFDCLQKIWKNKYTKSYGASPGLNEFISFANKLTNFISYSIVKEADKSKRAKLLSHFIFIAEYCRKFNNFSSMTAIISALYSSSIYRLEKTWQAVIPQTRDLLQSLDKLMDPKKNFINYRSELKSLHSAPCVPFFGVYLSDLTFTDSGNPDYLVLEHGLKGVHDEKKYINFNKRSRLVDILQEIIYFKKTHYDFTKDRTVIECISNSLENIPHIEKQYQLSLIIEPKPRKKVVPNSNSNNKSQEKSRDDQTDEGKTSTKKDRFSKFQLHKTKKKAPKVSK</sequence>
<dbReference type="EMBL" id="AAFW02000167">
    <property type="protein sequence ID" value="EDN59531.1"/>
    <property type="status" value="ALT_INIT"/>
    <property type="molecule type" value="Genomic_DNA"/>
</dbReference>
<dbReference type="SMR" id="A7A0P0"/>
<dbReference type="HOGENOM" id="CLU_002171_0_0_1"/>
<dbReference type="OrthoDB" id="17350at4893"/>
<dbReference type="Proteomes" id="UP000007060">
    <property type="component" value="Unassembled WGS sequence"/>
</dbReference>
<dbReference type="GO" id="GO:0005886">
    <property type="term" value="C:plasma membrane"/>
    <property type="evidence" value="ECO:0007669"/>
    <property type="project" value="TreeGrafter"/>
</dbReference>
<dbReference type="GO" id="GO:0005085">
    <property type="term" value="F:guanyl-nucleotide exchange factor activity"/>
    <property type="evidence" value="ECO:0007669"/>
    <property type="project" value="UniProtKB-KW"/>
</dbReference>
<dbReference type="GO" id="GO:0051301">
    <property type="term" value="P:cell division"/>
    <property type="evidence" value="ECO:0007669"/>
    <property type="project" value="UniProtKB-KW"/>
</dbReference>
<dbReference type="GO" id="GO:0007265">
    <property type="term" value="P:Ras protein signal transduction"/>
    <property type="evidence" value="ECO:0007669"/>
    <property type="project" value="TreeGrafter"/>
</dbReference>
<dbReference type="CDD" id="cd00155">
    <property type="entry name" value="RasGEF"/>
    <property type="match status" value="1"/>
</dbReference>
<dbReference type="CDD" id="cd06224">
    <property type="entry name" value="REM"/>
    <property type="match status" value="1"/>
</dbReference>
<dbReference type="CDD" id="cd11883">
    <property type="entry name" value="SH3_Sdc25"/>
    <property type="match status" value="1"/>
</dbReference>
<dbReference type="Gene3D" id="1.10.840.10">
    <property type="entry name" value="Ras guanine-nucleotide exchange factors catalytic domain"/>
    <property type="match status" value="1"/>
</dbReference>
<dbReference type="Gene3D" id="2.30.30.40">
    <property type="entry name" value="SH3 Domains"/>
    <property type="match status" value="1"/>
</dbReference>
<dbReference type="Gene3D" id="1.20.870.10">
    <property type="entry name" value="Son of sevenless (SoS) protein Chain: S domain 1"/>
    <property type="match status" value="1"/>
</dbReference>
<dbReference type="InterPro" id="IPR008937">
    <property type="entry name" value="Ras-like_GEF"/>
</dbReference>
<dbReference type="InterPro" id="IPR000651">
    <property type="entry name" value="Ras-like_Gua-exchang_fac_N"/>
</dbReference>
<dbReference type="InterPro" id="IPR019804">
    <property type="entry name" value="Ras_G-nucl-exch_fac_CS"/>
</dbReference>
<dbReference type="InterPro" id="IPR023578">
    <property type="entry name" value="Ras_GEF_dom_sf"/>
</dbReference>
<dbReference type="InterPro" id="IPR001895">
    <property type="entry name" value="RASGEF_cat_dom"/>
</dbReference>
<dbReference type="InterPro" id="IPR036964">
    <property type="entry name" value="RASGEF_cat_dom_sf"/>
</dbReference>
<dbReference type="InterPro" id="IPR036028">
    <property type="entry name" value="SH3-like_dom_sf"/>
</dbReference>
<dbReference type="InterPro" id="IPR001452">
    <property type="entry name" value="SH3_domain"/>
</dbReference>
<dbReference type="PANTHER" id="PTHR23113:SF368">
    <property type="entry name" value="CELL DIVISION CONTROL PROTEIN 25"/>
    <property type="match status" value="1"/>
</dbReference>
<dbReference type="PANTHER" id="PTHR23113">
    <property type="entry name" value="GUANINE NUCLEOTIDE EXCHANGE FACTOR"/>
    <property type="match status" value="1"/>
</dbReference>
<dbReference type="Pfam" id="PF00617">
    <property type="entry name" value="RasGEF"/>
    <property type="match status" value="1"/>
</dbReference>
<dbReference type="Pfam" id="PF00618">
    <property type="entry name" value="RasGEF_N"/>
    <property type="match status" value="1"/>
</dbReference>
<dbReference type="SMART" id="SM00147">
    <property type="entry name" value="RasGEF"/>
    <property type="match status" value="1"/>
</dbReference>
<dbReference type="SMART" id="SM00229">
    <property type="entry name" value="RasGEFN"/>
    <property type="match status" value="1"/>
</dbReference>
<dbReference type="SMART" id="SM00326">
    <property type="entry name" value="SH3"/>
    <property type="match status" value="1"/>
</dbReference>
<dbReference type="SUPFAM" id="SSF48366">
    <property type="entry name" value="Ras GEF"/>
    <property type="match status" value="1"/>
</dbReference>
<dbReference type="SUPFAM" id="SSF50044">
    <property type="entry name" value="SH3-domain"/>
    <property type="match status" value="1"/>
</dbReference>
<dbReference type="PROSITE" id="PS00720">
    <property type="entry name" value="RASGEF"/>
    <property type="match status" value="1"/>
</dbReference>
<dbReference type="PROSITE" id="PS50009">
    <property type="entry name" value="RASGEF_CAT"/>
    <property type="match status" value="1"/>
</dbReference>
<dbReference type="PROSITE" id="PS50212">
    <property type="entry name" value="RASGEF_NTER"/>
    <property type="match status" value="1"/>
</dbReference>
<dbReference type="PROSITE" id="PS50002">
    <property type="entry name" value="SH3"/>
    <property type="match status" value="1"/>
</dbReference>
<feature type="chain" id="PRO_0000393439" description="Guanine nucleotide exchange factor SDC25">
    <location>
        <begin position="1"/>
        <end position="1252"/>
    </location>
</feature>
<feature type="domain" description="SH3" evidence="4">
    <location>
        <begin position="26"/>
        <end position="97"/>
    </location>
</feature>
<feature type="domain" description="N-terminal Ras-GEF" evidence="2">
    <location>
        <begin position="782"/>
        <end position="914"/>
    </location>
</feature>
<feature type="domain" description="Ras-GEF" evidence="3">
    <location>
        <begin position="952"/>
        <end position="1199"/>
    </location>
</feature>
<feature type="region of interest" description="Disordered" evidence="5">
    <location>
        <begin position="409"/>
        <end position="454"/>
    </location>
</feature>
<feature type="region of interest" description="Disordered" evidence="5">
    <location>
        <begin position="623"/>
        <end position="648"/>
    </location>
</feature>
<feature type="region of interest" description="Disordered" evidence="5">
    <location>
        <begin position="1201"/>
        <end position="1252"/>
    </location>
</feature>
<feature type="compositionally biased region" description="Low complexity" evidence="5">
    <location>
        <begin position="416"/>
        <end position="428"/>
    </location>
</feature>
<feature type="compositionally biased region" description="Basic and acidic residues" evidence="5">
    <location>
        <begin position="1214"/>
        <end position="1236"/>
    </location>
</feature>
<feature type="compositionally biased region" description="Basic residues" evidence="5">
    <location>
        <begin position="1239"/>
        <end position="1252"/>
    </location>
</feature>
<accession>A7A0P0</accession>
<keyword id="KW-0131">Cell cycle</keyword>
<keyword id="KW-0132">Cell division</keyword>
<keyword id="KW-0344">Guanine-nucleotide releasing factor</keyword>
<keyword id="KW-0728">SH3 domain</keyword>
<gene>
    <name type="primary">SDC25</name>
    <name type="synonym">SCD25</name>
    <name type="ORF">SCY_3564</name>
</gene>
<reference key="1">
    <citation type="journal article" date="2007" name="Proc. Natl. Acad. Sci. U.S.A.">
        <title>Genome sequencing and comparative analysis of Saccharomyces cerevisiae strain YJM789.</title>
        <authorList>
            <person name="Wei W."/>
            <person name="McCusker J.H."/>
            <person name="Hyman R.W."/>
            <person name="Jones T."/>
            <person name="Ning Y."/>
            <person name="Cao Z."/>
            <person name="Gu Z."/>
            <person name="Bruno D."/>
            <person name="Miranda M."/>
            <person name="Nguyen M."/>
            <person name="Wilhelmy J."/>
            <person name="Komp C."/>
            <person name="Tamse R."/>
            <person name="Wang X."/>
            <person name="Jia P."/>
            <person name="Luedi P."/>
            <person name="Oefner P.J."/>
            <person name="David L."/>
            <person name="Dietrich F.S."/>
            <person name="Li Y."/>
            <person name="Davis R.W."/>
            <person name="Steinmetz L.M."/>
        </authorList>
    </citation>
    <scope>NUCLEOTIDE SEQUENCE [LARGE SCALE GENOMIC DNA]</scope>
    <source>
        <strain>YJM789</strain>
    </source>
</reference>
<proteinExistence type="inferred from homology"/>
<evidence type="ECO:0000250" key="1"/>
<evidence type="ECO:0000255" key="2">
    <source>
        <dbReference type="PROSITE-ProRule" id="PRU00135"/>
    </source>
</evidence>
<evidence type="ECO:0000255" key="3">
    <source>
        <dbReference type="PROSITE-ProRule" id="PRU00168"/>
    </source>
</evidence>
<evidence type="ECO:0000255" key="4">
    <source>
        <dbReference type="PROSITE-ProRule" id="PRU00192"/>
    </source>
</evidence>
<evidence type="ECO:0000256" key="5">
    <source>
        <dbReference type="SAM" id="MobiDB-lite"/>
    </source>
</evidence>
<evidence type="ECO:0000305" key="6"/>
<comment type="function">
    <text evidence="1">Promotes the exchange of Ras-bound GDP by GTP.</text>
</comment>
<comment type="miscellaneous">
    <text>Suppresses the CDC25-5 mutation in yeast (restores cAMP level) and has similar functions as CDC25.</text>
</comment>
<comment type="sequence caution" evidence="6">
    <conflict type="erroneous initiation">
        <sequence resource="EMBL-CDS" id="EDN59531"/>
    </conflict>
    <text>Truncated N-terminus.</text>
</comment>
<protein>
    <recommendedName>
        <fullName>Guanine nucleotide exchange factor SDC25</fullName>
    </recommendedName>
</protein>
<organism>
    <name type="scientific">Saccharomyces cerevisiae (strain YJM789)</name>
    <name type="common">Baker's yeast</name>
    <dbReference type="NCBI Taxonomy" id="307796"/>
    <lineage>
        <taxon>Eukaryota</taxon>
        <taxon>Fungi</taxon>
        <taxon>Dikarya</taxon>
        <taxon>Ascomycota</taxon>
        <taxon>Saccharomycotina</taxon>
        <taxon>Saccharomycetes</taxon>
        <taxon>Saccharomycetales</taxon>
        <taxon>Saccharomycetaceae</taxon>
        <taxon>Saccharomyces</taxon>
    </lineage>
</organism>